<dbReference type="EMBL" id="U00090">
    <property type="protein sequence ID" value="AAB91668.1"/>
    <property type="molecule type" value="Genomic_DNA"/>
</dbReference>
<dbReference type="RefSeq" id="NP_443856.1">
    <property type="nucleotide sequence ID" value="NC_000914.2"/>
</dbReference>
<dbReference type="RefSeq" id="WP_010875383.1">
    <property type="nucleotide sequence ID" value="NC_000914.2"/>
</dbReference>
<dbReference type="SMR" id="P55450"/>
<dbReference type="KEGG" id="rhi:NGR_a03700"/>
<dbReference type="PATRIC" id="fig|394.7.peg.378"/>
<dbReference type="eggNOG" id="COG0483">
    <property type="taxonomic scope" value="Bacteria"/>
</dbReference>
<dbReference type="HOGENOM" id="CLU_044118_0_3_5"/>
<dbReference type="OrthoDB" id="9785695at2"/>
<dbReference type="Proteomes" id="UP000001054">
    <property type="component" value="Plasmid pNGR234a"/>
</dbReference>
<dbReference type="GO" id="GO:0005886">
    <property type="term" value="C:plasma membrane"/>
    <property type="evidence" value="ECO:0007669"/>
    <property type="project" value="UniProtKB-SubCell"/>
</dbReference>
<dbReference type="GO" id="GO:0008934">
    <property type="term" value="F:inositol monophosphate 1-phosphatase activity"/>
    <property type="evidence" value="ECO:0007669"/>
    <property type="project" value="TreeGrafter"/>
</dbReference>
<dbReference type="GO" id="GO:0046872">
    <property type="term" value="F:metal ion binding"/>
    <property type="evidence" value="ECO:0007669"/>
    <property type="project" value="UniProtKB-KW"/>
</dbReference>
<dbReference type="GO" id="GO:0006020">
    <property type="term" value="P:inositol metabolic process"/>
    <property type="evidence" value="ECO:0007669"/>
    <property type="project" value="TreeGrafter"/>
</dbReference>
<dbReference type="GO" id="GO:0046854">
    <property type="term" value="P:phosphatidylinositol phosphate biosynthetic process"/>
    <property type="evidence" value="ECO:0007669"/>
    <property type="project" value="InterPro"/>
</dbReference>
<dbReference type="GO" id="GO:0007165">
    <property type="term" value="P:signal transduction"/>
    <property type="evidence" value="ECO:0007669"/>
    <property type="project" value="TreeGrafter"/>
</dbReference>
<dbReference type="CDD" id="cd01643">
    <property type="entry name" value="Bacterial_IMPase_like_2"/>
    <property type="match status" value="1"/>
</dbReference>
<dbReference type="Gene3D" id="3.40.190.80">
    <property type="match status" value="1"/>
</dbReference>
<dbReference type="Gene3D" id="3.30.540.10">
    <property type="entry name" value="Fructose-1,6-Bisphosphatase, subunit A, domain 1"/>
    <property type="match status" value="1"/>
</dbReference>
<dbReference type="InterPro" id="IPR020583">
    <property type="entry name" value="Inositol_monoP_metal-BS"/>
</dbReference>
<dbReference type="InterPro" id="IPR000760">
    <property type="entry name" value="Inositol_monophosphatase-like"/>
</dbReference>
<dbReference type="InterPro" id="IPR020550">
    <property type="entry name" value="Inositol_monophosphatase_CS"/>
</dbReference>
<dbReference type="PANTHER" id="PTHR20854">
    <property type="entry name" value="INOSITOL MONOPHOSPHATASE"/>
    <property type="match status" value="1"/>
</dbReference>
<dbReference type="PANTHER" id="PTHR20854:SF4">
    <property type="entry name" value="INOSITOL-1-MONOPHOSPHATASE-RELATED"/>
    <property type="match status" value="1"/>
</dbReference>
<dbReference type="Pfam" id="PF00459">
    <property type="entry name" value="Inositol_P"/>
    <property type="match status" value="1"/>
</dbReference>
<dbReference type="PRINTS" id="PR00377">
    <property type="entry name" value="IMPHPHTASES"/>
</dbReference>
<dbReference type="SUPFAM" id="SSF56655">
    <property type="entry name" value="Carbohydrate phosphatase"/>
    <property type="match status" value="1"/>
</dbReference>
<dbReference type="PROSITE" id="PS00629">
    <property type="entry name" value="IMP_1"/>
    <property type="match status" value="1"/>
</dbReference>
<dbReference type="PROSITE" id="PS00630">
    <property type="entry name" value="IMP_2"/>
    <property type="match status" value="1"/>
</dbReference>
<protein>
    <recommendedName>
        <fullName>Uncharacterized protein y4fL</fullName>
    </recommendedName>
</protein>
<name>Y4FL_SINFN</name>
<organism>
    <name type="scientific">Sinorhizobium fredii (strain NBRC 101917 / NGR234)</name>
    <dbReference type="NCBI Taxonomy" id="394"/>
    <lineage>
        <taxon>Bacteria</taxon>
        <taxon>Pseudomonadati</taxon>
        <taxon>Pseudomonadota</taxon>
        <taxon>Alphaproteobacteria</taxon>
        <taxon>Hyphomicrobiales</taxon>
        <taxon>Rhizobiaceae</taxon>
        <taxon>Sinorhizobium/Ensifer group</taxon>
        <taxon>Sinorhizobium</taxon>
    </lineage>
</organism>
<geneLocation type="plasmid">
    <name>sym pNGR234a</name>
</geneLocation>
<comment type="subcellular location">
    <subcellularLocation>
        <location evidence="3">Cell membrane</location>
        <topology evidence="3">Multi-pass membrane protein</topology>
    </subcellularLocation>
</comment>
<comment type="similarity">
    <text evidence="3">Belongs to the inositol monophosphatase superfamily.</text>
</comment>
<sequence length="275" mass="29147">MTSDLDTRLDLLRNITSKVGAFALARFGNLSHIVIETKGEADYVSAADRDAESLARRLIHAQFPADAIVGEEQLGDAEVDHWLIDPIDGTANFLSGIPLWAVSIAFVRNKEPVLGAVALPALDTLLWASVDGPLHGTGSVSPLVGAQPIAFGIGRNRTWPLAHRLEVEAAFEARGYHIVCLGSCAAALAMVAAGRLAGYVEHGTHLWDCAAGHVLCRAAGAPSSILFEADGKVAIIAAPQHLRVTAKADARSLSEKHIFDPGSDRISHRMESSAD</sequence>
<evidence type="ECO:0000250" key="1"/>
<evidence type="ECO:0000255" key="2"/>
<evidence type="ECO:0000305" key="3"/>
<feature type="chain" id="PRO_0000142583" description="Uncharacterized protein y4fL">
    <location>
        <begin position="1"/>
        <end position="275"/>
    </location>
</feature>
<feature type="transmembrane region" description="Helical" evidence="2">
    <location>
        <begin position="87"/>
        <end position="107"/>
    </location>
</feature>
<feature type="transmembrane region" description="Helical" evidence="2">
    <location>
        <begin position="112"/>
        <end position="132"/>
    </location>
</feature>
<feature type="transmembrane region" description="Helical" evidence="2">
    <location>
        <begin position="178"/>
        <end position="198"/>
    </location>
</feature>
<feature type="binding site" evidence="1">
    <location>
        <position position="71"/>
    </location>
    <ligand>
        <name>Mg(2+)</name>
        <dbReference type="ChEBI" id="CHEBI:18420"/>
        <label>1</label>
    </ligand>
</feature>
<feature type="binding site" evidence="1">
    <location>
        <position position="71"/>
    </location>
    <ligand>
        <name>substrate</name>
    </ligand>
</feature>
<feature type="binding site" evidence="1">
    <location>
        <position position="85"/>
    </location>
    <ligand>
        <name>Mg(2+)</name>
        <dbReference type="ChEBI" id="CHEBI:18420"/>
        <label>1</label>
    </ligand>
</feature>
<feature type="binding site" evidence="1">
    <location>
        <position position="85"/>
    </location>
    <ligand>
        <name>Mg(2+)</name>
        <dbReference type="ChEBI" id="CHEBI:18420"/>
        <label>2</label>
    </ligand>
</feature>
<feature type="binding site" evidence="1">
    <location>
        <begin position="87"/>
        <end position="90"/>
    </location>
    <ligand>
        <name>substrate</name>
    </ligand>
</feature>
<feature type="binding site" evidence="1">
    <location>
        <position position="87"/>
    </location>
    <ligand>
        <name>Mg(2+)</name>
        <dbReference type="ChEBI" id="CHEBI:18420"/>
        <label>1</label>
    </ligand>
</feature>
<feature type="binding site" evidence="1">
    <location>
        <position position="88"/>
    </location>
    <ligand>
        <name>Mg(2+)</name>
        <dbReference type="ChEBI" id="CHEBI:18420"/>
        <label>2</label>
    </ligand>
</feature>
<feature type="binding site" evidence="1">
    <location>
        <position position="208"/>
    </location>
    <ligand>
        <name>Mg(2+)</name>
        <dbReference type="ChEBI" id="CHEBI:18420"/>
        <label>2</label>
    </ligand>
</feature>
<feature type="binding site" evidence="1">
    <location>
        <position position="208"/>
    </location>
    <ligand>
        <name>substrate</name>
    </ligand>
</feature>
<proteinExistence type="inferred from homology"/>
<keyword id="KW-1003">Cell membrane</keyword>
<keyword id="KW-0378">Hydrolase</keyword>
<keyword id="KW-0460">Magnesium</keyword>
<keyword id="KW-0472">Membrane</keyword>
<keyword id="KW-0479">Metal-binding</keyword>
<keyword id="KW-0614">Plasmid</keyword>
<keyword id="KW-1185">Reference proteome</keyword>
<keyword id="KW-0812">Transmembrane</keyword>
<keyword id="KW-1133">Transmembrane helix</keyword>
<reference key="1">
    <citation type="journal article" date="1997" name="Nature">
        <title>Molecular basis of symbiosis between Rhizobium and legumes.</title>
        <authorList>
            <person name="Freiberg C.A."/>
            <person name="Fellay R."/>
            <person name="Bairoch A."/>
            <person name="Broughton W.J."/>
            <person name="Rosenthal A."/>
            <person name="Perret X."/>
        </authorList>
    </citation>
    <scope>NUCLEOTIDE SEQUENCE [LARGE SCALE GENOMIC DNA]</scope>
    <source>
        <strain>NBRC 101917 / NGR234</strain>
    </source>
</reference>
<reference key="2">
    <citation type="journal article" date="2009" name="Appl. Environ. Microbiol.">
        <title>Rhizobium sp. strain NGR234 possesses a remarkable number of secretion systems.</title>
        <authorList>
            <person name="Schmeisser C."/>
            <person name="Liesegang H."/>
            <person name="Krysciak D."/>
            <person name="Bakkou N."/>
            <person name="Le Quere A."/>
            <person name="Wollherr A."/>
            <person name="Heinemeyer I."/>
            <person name="Morgenstern B."/>
            <person name="Pommerening-Roeser A."/>
            <person name="Flores M."/>
            <person name="Palacios R."/>
            <person name="Brenner S."/>
            <person name="Gottschalk G."/>
            <person name="Schmitz R.A."/>
            <person name="Broughton W.J."/>
            <person name="Perret X."/>
            <person name="Strittmatter A.W."/>
            <person name="Streit W.R."/>
        </authorList>
    </citation>
    <scope>NUCLEOTIDE SEQUENCE [LARGE SCALE GENOMIC DNA]</scope>
    <source>
        <strain>NBRC 101917 / NGR234</strain>
    </source>
</reference>
<accession>P55450</accession>
<gene>
    <name type="ordered locus">NGR_a03700</name>
    <name type="ORF">y4fL</name>
</gene>